<gene>
    <name evidence="1" type="primary">argG</name>
    <name type="ordered locus">MAE_02090</name>
</gene>
<protein>
    <recommendedName>
        <fullName evidence="1">Argininosuccinate synthase</fullName>
        <ecNumber evidence="1">6.3.4.5</ecNumber>
    </recommendedName>
    <alternativeName>
        <fullName evidence="1">Citrulline--aspartate ligase</fullName>
    </alternativeName>
</protein>
<keyword id="KW-0028">Amino-acid biosynthesis</keyword>
<keyword id="KW-0055">Arginine biosynthesis</keyword>
<keyword id="KW-0067">ATP-binding</keyword>
<keyword id="KW-0963">Cytoplasm</keyword>
<keyword id="KW-0436">Ligase</keyword>
<keyword id="KW-0547">Nucleotide-binding</keyword>
<proteinExistence type="inferred from homology"/>
<name>ASSY_MICAN</name>
<sequence>MGRAKRVVLAYSGGVDTSVCIPYLKQEWGVEEVITLAADLGQGDELGPIQEKALRCGAIESLVVNAQEEFVKEYAFPSIQANALYENRYPLSTALARPLIAKLLVEAAEKYGADAVSHGCTGKGNDQVRFDVGIMALNPSLKVLAPAREWGMSREETIAYGEKFGIESPVKKSSPFSIDRNLLGRSIEAGPLEDPMTEPPEEIYLMTKAIADTPNEPEYVDIGFNQGIPVSLNGENLAPVTLISQLNDLVGKHGVGRLDMIENRVVGIKSREIYEAPALLVLIDAHRDLESLTLTGDVTQYKRGIEDTYGQLIYKGLWYSPLKEAIDAFILKTQEQVTGSVRVKLFKGNAKVVGRQSVNSIYSPDLATYGAEDQFDHKAAEGFIYVWGLPSKVWAEKTRGK</sequence>
<accession>B0JM14</accession>
<comment type="catalytic activity">
    <reaction evidence="1">
        <text>L-citrulline + L-aspartate + ATP = 2-(N(omega)-L-arginino)succinate + AMP + diphosphate + H(+)</text>
        <dbReference type="Rhea" id="RHEA:10932"/>
        <dbReference type="ChEBI" id="CHEBI:15378"/>
        <dbReference type="ChEBI" id="CHEBI:29991"/>
        <dbReference type="ChEBI" id="CHEBI:30616"/>
        <dbReference type="ChEBI" id="CHEBI:33019"/>
        <dbReference type="ChEBI" id="CHEBI:57472"/>
        <dbReference type="ChEBI" id="CHEBI:57743"/>
        <dbReference type="ChEBI" id="CHEBI:456215"/>
        <dbReference type="EC" id="6.3.4.5"/>
    </reaction>
</comment>
<comment type="pathway">
    <text evidence="1">Amino-acid biosynthesis; L-arginine biosynthesis; L-arginine from L-ornithine and carbamoyl phosphate: step 2/3.</text>
</comment>
<comment type="subunit">
    <text evidence="1">Homotetramer.</text>
</comment>
<comment type="subcellular location">
    <subcellularLocation>
        <location evidence="1">Cytoplasm</location>
    </subcellularLocation>
</comment>
<comment type="similarity">
    <text evidence="1">Belongs to the argininosuccinate synthase family. Type 1 subfamily.</text>
</comment>
<evidence type="ECO:0000255" key="1">
    <source>
        <dbReference type="HAMAP-Rule" id="MF_00005"/>
    </source>
</evidence>
<dbReference type="EC" id="6.3.4.5" evidence="1"/>
<dbReference type="EMBL" id="AP009552">
    <property type="protein sequence ID" value="BAG00031.1"/>
    <property type="molecule type" value="Genomic_DNA"/>
</dbReference>
<dbReference type="RefSeq" id="WP_002797600.1">
    <property type="nucleotide sequence ID" value="NC_010296.1"/>
</dbReference>
<dbReference type="SMR" id="B0JM14"/>
<dbReference type="STRING" id="449447.MAE_02090"/>
<dbReference type="PaxDb" id="449447-MAE_02090"/>
<dbReference type="EnsemblBacteria" id="BAG00031">
    <property type="protein sequence ID" value="BAG00031"/>
    <property type="gene ID" value="MAE_02090"/>
</dbReference>
<dbReference type="KEGG" id="mar:MAE_02090"/>
<dbReference type="eggNOG" id="COG0137">
    <property type="taxonomic scope" value="Bacteria"/>
</dbReference>
<dbReference type="HOGENOM" id="CLU_032784_4_2_3"/>
<dbReference type="BioCyc" id="MAER449447:MAE_RS00955-MONOMER"/>
<dbReference type="UniPathway" id="UPA00068">
    <property type="reaction ID" value="UER00113"/>
</dbReference>
<dbReference type="Proteomes" id="UP000001510">
    <property type="component" value="Chromosome"/>
</dbReference>
<dbReference type="GO" id="GO:0005737">
    <property type="term" value="C:cytoplasm"/>
    <property type="evidence" value="ECO:0007669"/>
    <property type="project" value="UniProtKB-SubCell"/>
</dbReference>
<dbReference type="GO" id="GO:0004055">
    <property type="term" value="F:argininosuccinate synthase activity"/>
    <property type="evidence" value="ECO:0007669"/>
    <property type="project" value="UniProtKB-UniRule"/>
</dbReference>
<dbReference type="GO" id="GO:0005524">
    <property type="term" value="F:ATP binding"/>
    <property type="evidence" value="ECO:0007669"/>
    <property type="project" value="UniProtKB-UniRule"/>
</dbReference>
<dbReference type="GO" id="GO:0000053">
    <property type="term" value="P:argininosuccinate metabolic process"/>
    <property type="evidence" value="ECO:0007669"/>
    <property type="project" value="TreeGrafter"/>
</dbReference>
<dbReference type="GO" id="GO:0006526">
    <property type="term" value="P:L-arginine biosynthetic process"/>
    <property type="evidence" value="ECO:0007669"/>
    <property type="project" value="UniProtKB-UniRule"/>
</dbReference>
<dbReference type="GO" id="GO:0000050">
    <property type="term" value="P:urea cycle"/>
    <property type="evidence" value="ECO:0007669"/>
    <property type="project" value="TreeGrafter"/>
</dbReference>
<dbReference type="CDD" id="cd01999">
    <property type="entry name" value="ASS"/>
    <property type="match status" value="1"/>
</dbReference>
<dbReference type="FunFam" id="3.40.50.620:FF:000019">
    <property type="entry name" value="Argininosuccinate synthase"/>
    <property type="match status" value="1"/>
</dbReference>
<dbReference type="FunFam" id="3.90.1260.10:FF:000007">
    <property type="entry name" value="Argininosuccinate synthase"/>
    <property type="match status" value="1"/>
</dbReference>
<dbReference type="Gene3D" id="3.90.1260.10">
    <property type="entry name" value="Argininosuccinate synthetase, chain A, domain 2"/>
    <property type="match status" value="1"/>
</dbReference>
<dbReference type="Gene3D" id="3.40.50.620">
    <property type="entry name" value="HUPs"/>
    <property type="match status" value="1"/>
</dbReference>
<dbReference type="Gene3D" id="1.20.5.470">
    <property type="entry name" value="Single helix bin"/>
    <property type="match status" value="1"/>
</dbReference>
<dbReference type="HAMAP" id="MF_00005">
    <property type="entry name" value="Arg_succ_synth_type1"/>
    <property type="match status" value="1"/>
</dbReference>
<dbReference type="InterPro" id="IPR048268">
    <property type="entry name" value="Arginosuc_syn_C"/>
</dbReference>
<dbReference type="InterPro" id="IPR048267">
    <property type="entry name" value="Arginosuc_syn_N"/>
</dbReference>
<dbReference type="InterPro" id="IPR001518">
    <property type="entry name" value="Arginosuc_synth"/>
</dbReference>
<dbReference type="InterPro" id="IPR018223">
    <property type="entry name" value="Arginosuc_synth_CS"/>
</dbReference>
<dbReference type="InterPro" id="IPR023434">
    <property type="entry name" value="Arginosuc_synth_type_1_subfam"/>
</dbReference>
<dbReference type="InterPro" id="IPR024074">
    <property type="entry name" value="AS_cat/multimer_dom_body"/>
</dbReference>
<dbReference type="InterPro" id="IPR014729">
    <property type="entry name" value="Rossmann-like_a/b/a_fold"/>
</dbReference>
<dbReference type="NCBIfam" id="TIGR00032">
    <property type="entry name" value="argG"/>
    <property type="match status" value="1"/>
</dbReference>
<dbReference type="NCBIfam" id="NF001770">
    <property type="entry name" value="PRK00509.1"/>
    <property type="match status" value="1"/>
</dbReference>
<dbReference type="PANTHER" id="PTHR11587">
    <property type="entry name" value="ARGININOSUCCINATE SYNTHASE"/>
    <property type="match status" value="1"/>
</dbReference>
<dbReference type="PANTHER" id="PTHR11587:SF2">
    <property type="entry name" value="ARGININOSUCCINATE SYNTHASE"/>
    <property type="match status" value="1"/>
</dbReference>
<dbReference type="Pfam" id="PF20979">
    <property type="entry name" value="Arginosuc_syn_C"/>
    <property type="match status" value="1"/>
</dbReference>
<dbReference type="Pfam" id="PF00764">
    <property type="entry name" value="Arginosuc_synth"/>
    <property type="match status" value="1"/>
</dbReference>
<dbReference type="SUPFAM" id="SSF52402">
    <property type="entry name" value="Adenine nucleotide alpha hydrolases-like"/>
    <property type="match status" value="1"/>
</dbReference>
<dbReference type="SUPFAM" id="SSF69864">
    <property type="entry name" value="Argininosuccinate synthetase, C-terminal domain"/>
    <property type="match status" value="1"/>
</dbReference>
<dbReference type="PROSITE" id="PS00564">
    <property type="entry name" value="ARGININOSUCCIN_SYN_1"/>
    <property type="match status" value="1"/>
</dbReference>
<dbReference type="PROSITE" id="PS00565">
    <property type="entry name" value="ARGININOSUCCIN_SYN_2"/>
    <property type="match status" value="1"/>
</dbReference>
<reference key="1">
    <citation type="journal article" date="2007" name="DNA Res.">
        <title>Complete genomic structure of the bloom-forming toxic cyanobacterium Microcystis aeruginosa NIES-843.</title>
        <authorList>
            <person name="Kaneko T."/>
            <person name="Nakajima N."/>
            <person name="Okamoto S."/>
            <person name="Suzuki I."/>
            <person name="Tanabe Y."/>
            <person name="Tamaoki M."/>
            <person name="Nakamura Y."/>
            <person name="Kasai F."/>
            <person name="Watanabe A."/>
            <person name="Kawashima K."/>
            <person name="Kishida Y."/>
            <person name="Ono A."/>
            <person name="Shimizu Y."/>
            <person name="Takahashi C."/>
            <person name="Minami C."/>
            <person name="Fujishiro T."/>
            <person name="Kohara M."/>
            <person name="Katoh M."/>
            <person name="Nakazaki N."/>
            <person name="Nakayama S."/>
            <person name="Yamada M."/>
            <person name="Tabata S."/>
            <person name="Watanabe M.M."/>
        </authorList>
    </citation>
    <scope>NUCLEOTIDE SEQUENCE [LARGE SCALE GENOMIC DNA]</scope>
    <source>
        <strain>NIES-843 / IAM M-247</strain>
    </source>
</reference>
<organism>
    <name type="scientific">Microcystis aeruginosa (strain NIES-843 / IAM M-2473)</name>
    <dbReference type="NCBI Taxonomy" id="449447"/>
    <lineage>
        <taxon>Bacteria</taxon>
        <taxon>Bacillati</taxon>
        <taxon>Cyanobacteriota</taxon>
        <taxon>Cyanophyceae</taxon>
        <taxon>Oscillatoriophycideae</taxon>
        <taxon>Chroococcales</taxon>
        <taxon>Microcystaceae</taxon>
        <taxon>Microcystis</taxon>
    </lineage>
</organism>
<feature type="chain" id="PRO_1000089044" description="Argininosuccinate synthase">
    <location>
        <begin position="1"/>
        <end position="401"/>
    </location>
</feature>
<feature type="binding site" evidence="1">
    <location>
        <begin position="10"/>
        <end position="18"/>
    </location>
    <ligand>
        <name>ATP</name>
        <dbReference type="ChEBI" id="CHEBI:30616"/>
    </ligand>
</feature>
<feature type="binding site" evidence="1">
    <location>
        <position position="38"/>
    </location>
    <ligand>
        <name>ATP</name>
        <dbReference type="ChEBI" id="CHEBI:30616"/>
    </ligand>
</feature>
<feature type="binding site" evidence="1">
    <location>
        <position position="89"/>
    </location>
    <ligand>
        <name>L-citrulline</name>
        <dbReference type="ChEBI" id="CHEBI:57743"/>
    </ligand>
</feature>
<feature type="binding site" evidence="1">
    <location>
        <position position="119"/>
    </location>
    <ligand>
        <name>ATP</name>
        <dbReference type="ChEBI" id="CHEBI:30616"/>
    </ligand>
</feature>
<feature type="binding site" evidence="1">
    <location>
        <position position="121"/>
    </location>
    <ligand>
        <name>L-aspartate</name>
        <dbReference type="ChEBI" id="CHEBI:29991"/>
    </ligand>
</feature>
<feature type="binding site" evidence="1">
    <location>
        <position position="125"/>
    </location>
    <ligand>
        <name>L-aspartate</name>
        <dbReference type="ChEBI" id="CHEBI:29991"/>
    </ligand>
</feature>
<feature type="binding site" evidence="1">
    <location>
        <position position="125"/>
    </location>
    <ligand>
        <name>L-citrulline</name>
        <dbReference type="ChEBI" id="CHEBI:57743"/>
    </ligand>
</feature>
<feature type="binding site" evidence="1">
    <location>
        <position position="126"/>
    </location>
    <ligand>
        <name>L-aspartate</name>
        <dbReference type="ChEBI" id="CHEBI:29991"/>
    </ligand>
</feature>
<feature type="binding site" evidence="1">
    <location>
        <position position="129"/>
    </location>
    <ligand>
        <name>L-citrulline</name>
        <dbReference type="ChEBI" id="CHEBI:57743"/>
    </ligand>
</feature>
<feature type="binding site" evidence="1">
    <location>
        <position position="177"/>
    </location>
    <ligand>
        <name>L-citrulline</name>
        <dbReference type="ChEBI" id="CHEBI:57743"/>
    </ligand>
</feature>
<feature type="binding site" evidence="1">
    <location>
        <position position="186"/>
    </location>
    <ligand>
        <name>L-citrulline</name>
        <dbReference type="ChEBI" id="CHEBI:57743"/>
    </ligand>
</feature>
<feature type="binding site" evidence="1">
    <location>
        <position position="262"/>
    </location>
    <ligand>
        <name>L-citrulline</name>
        <dbReference type="ChEBI" id="CHEBI:57743"/>
    </ligand>
</feature>
<feature type="binding site" evidence="1">
    <location>
        <position position="274"/>
    </location>
    <ligand>
        <name>L-citrulline</name>
        <dbReference type="ChEBI" id="CHEBI:57743"/>
    </ligand>
</feature>